<proteinExistence type="inferred from homology"/>
<dbReference type="EC" id="7.4.2.8" evidence="1"/>
<dbReference type="EMBL" id="CP000511">
    <property type="protein sequence ID" value="ABM13964.1"/>
    <property type="status" value="ALT_INIT"/>
    <property type="molecule type" value="Genomic_DNA"/>
</dbReference>
<dbReference type="SMR" id="A1T9W4"/>
<dbReference type="STRING" id="350058.Mvan_3162"/>
<dbReference type="KEGG" id="mva:Mvan_3162"/>
<dbReference type="eggNOG" id="COG0653">
    <property type="taxonomic scope" value="Bacteria"/>
</dbReference>
<dbReference type="HOGENOM" id="CLU_005314_3_2_11"/>
<dbReference type="Proteomes" id="UP000009159">
    <property type="component" value="Chromosome"/>
</dbReference>
<dbReference type="GO" id="GO:0031522">
    <property type="term" value="C:cell envelope Sec protein transport complex"/>
    <property type="evidence" value="ECO:0007669"/>
    <property type="project" value="TreeGrafter"/>
</dbReference>
<dbReference type="GO" id="GO:0005829">
    <property type="term" value="C:cytosol"/>
    <property type="evidence" value="ECO:0007669"/>
    <property type="project" value="TreeGrafter"/>
</dbReference>
<dbReference type="GO" id="GO:0005886">
    <property type="term" value="C:plasma membrane"/>
    <property type="evidence" value="ECO:0007669"/>
    <property type="project" value="UniProtKB-SubCell"/>
</dbReference>
<dbReference type="GO" id="GO:0005524">
    <property type="term" value="F:ATP binding"/>
    <property type="evidence" value="ECO:0007669"/>
    <property type="project" value="UniProtKB-UniRule"/>
</dbReference>
<dbReference type="GO" id="GO:0008564">
    <property type="term" value="F:protein-exporting ATPase activity"/>
    <property type="evidence" value="ECO:0007669"/>
    <property type="project" value="UniProtKB-EC"/>
</dbReference>
<dbReference type="GO" id="GO:0065002">
    <property type="term" value="P:intracellular protein transmembrane transport"/>
    <property type="evidence" value="ECO:0007669"/>
    <property type="project" value="UniProtKB-UniRule"/>
</dbReference>
<dbReference type="GO" id="GO:0017038">
    <property type="term" value="P:protein import"/>
    <property type="evidence" value="ECO:0007669"/>
    <property type="project" value="InterPro"/>
</dbReference>
<dbReference type="GO" id="GO:0006605">
    <property type="term" value="P:protein targeting"/>
    <property type="evidence" value="ECO:0007669"/>
    <property type="project" value="UniProtKB-UniRule"/>
</dbReference>
<dbReference type="GO" id="GO:0043952">
    <property type="term" value="P:protein transport by the Sec complex"/>
    <property type="evidence" value="ECO:0007669"/>
    <property type="project" value="TreeGrafter"/>
</dbReference>
<dbReference type="CDD" id="cd17928">
    <property type="entry name" value="DEXDc_SecA"/>
    <property type="match status" value="1"/>
</dbReference>
<dbReference type="CDD" id="cd18803">
    <property type="entry name" value="SF2_C_secA"/>
    <property type="match status" value="1"/>
</dbReference>
<dbReference type="FunFam" id="3.40.50.300:FF:000429">
    <property type="entry name" value="Preprotein translocase subunit SecA"/>
    <property type="match status" value="1"/>
</dbReference>
<dbReference type="Gene3D" id="1.10.3060.10">
    <property type="entry name" value="Helical scaffold and wing domains of SecA"/>
    <property type="match status" value="1"/>
</dbReference>
<dbReference type="Gene3D" id="3.40.50.300">
    <property type="entry name" value="P-loop containing nucleotide triphosphate hydrolases"/>
    <property type="match status" value="3"/>
</dbReference>
<dbReference type="Gene3D" id="3.90.1440.10">
    <property type="entry name" value="SecA, preprotein cross-linking domain"/>
    <property type="match status" value="1"/>
</dbReference>
<dbReference type="HAMAP" id="MF_01382">
    <property type="entry name" value="SecA"/>
    <property type="match status" value="1"/>
</dbReference>
<dbReference type="InterPro" id="IPR014001">
    <property type="entry name" value="Helicase_ATP-bd"/>
</dbReference>
<dbReference type="InterPro" id="IPR001650">
    <property type="entry name" value="Helicase_C-like"/>
</dbReference>
<dbReference type="InterPro" id="IPR027417">
    <property type="entry name" value="P-loop_NTPase"/>
</dbReference>
<dbReference type="InterPro" id="IPR000185">
    <property type="entry name" value="SecA"/>
</dbReference>
<dbReference type="InterPro" id="IPR026389">
    <property type="entry name" value="SecA_Actinobact-type"/>
</dbReference>
<dbReference type="InterPro" id="IPR020937">
    <property type="entry name" value="SecA_CS"/>
</dbReference>
<dbReference type="InterPro" id="IPR011115">
    <property type="entry name" value="SecA_DEAD"/>
</dbReference>
<dbReference type="InterPro" id="IPR014018">
    <property type="entry name" value="SecA_motor_DEAD"/>
</dbReference>
<dbReference type="InterPro" id="IPR011130">
    <property type="entry name" value="SecA_preprotein_X-link_dom"/>
</dbReference>
<dbReference type="InterPro" id="IPR044722">
    <property type="entry name" value="SecA_SF2_C"/>
</dbReference>
<dbReference type="InterPro" id="IPR011116">
    <property type="entry name" value="SecA_Wing/Scaffold"/>
</dbReference>
<dbReference type="InterPro" id="IPR036266">
    <property type="entry name" value="SecA_Wing/Scaffold_sf"/>
</dbReference>
<dbReference type="InterPro" id="IPR036670">
    <property type="entry name" value="SecA_X-link_sf"/>
</dbReference>
<dbReference type="NCBIfam" id="TIGR04221">
    <property type="entry name" value="SecA2_Mycobac"/>
    <property type="match status" value="1"/>
</dbReference>
<dbReference type="PANTHER" id="PTHR30612:SF0">
    <property type="entry name" value="CHLOROPLAST PROTEIN-TRANSPORTING ATPASE"/>
    <property type="match status" value="1"/>
</dbReference>
<dbReference type="PANTHER" id="PTHR30612">
    <property type="entry name" value="SECA INNER MEMBRANE COMPONENT OF SEC PROTEIN SECRETION SYSTEM"/>
    <property type="match status" value="1"/>
</dbReference>
<dbReference type="Pfam" id="PF21090">
    <property type="entry name" value="P-loop_SecA"/>
    <property type="match status" value="1"/>
</dbReference>
<dbReference type="Pfam" id="PF07517">
    <property type="entry name" value="SecA_DEAD"/>
    <property type="match status" value="1"/>
</dbReference>
<dbReference type="Pfam" id="PF01043">
    <property type="entry name" value="SecA_PP_bind"/>
    <property type="match status" value="1"/>
</dbReference>
<dbReference type="Pfam" id="PF07516">
    <property type="entry name" value="SecA_SW"/>
    <property type="match status" value="1"/>
</dbReference>
<dbReference type="PRINTS" id="PR00906">
    <property type="entry name" value="SECA"/>
</dbReference>
<dbReference type="SMART" id="SM00957">
    <property type="entry name" value="SecA_DEAD"/>
    <property type="match status" value="1"/>
</dbReference>
<dbReference type="SMART" id="SM00958">
    <property type="entry name" value="SecA_PP_bind"/>
    <property type="match status" value="1"/>
</dbReference>
<dbReference type="SUPFAM" id="SSF81886">
    <property type="entry name" value="Helical scaffold and wing domains of SecA"/>
    <property type="match status" value="1"/>
</dbReference>
<dbReference type="SUPFAM" id="SSF52540">
    <property type="entry name" value="P-loop containing nucleoside triphosphate hydrolases"/>
    <property type="match status" value="2"/>
</dbReference>
<dbReference type="SUPFAM" id="SSF81767">
    <property type="entry name" value="Pre-protein crosslinking domain of SecA"/>
    <property type="match status" value="1"/>
</dbReference>
<dbReference type="PROSITE" id="PS01312">
    <property type="entry name" value="SECA"/>
    <property type="match status" value="1"/>
</dbReference>
<dbReference type="PROSITE" id="PS51196">
    <property type="entry name" value="SECA_MOTOR_DEAD"/>
    <property type="match status" value="1"/>
</dbReference>
<feature type="chain" id="PRO_0000318394" description="Protein translocase subunit SecA 3">
    <location>
        <begin position="1"/>
        <end position="785"/>
    </location>
</feature>
<feature type="binding site" evidence="1">
    <location>
        <position position="98"/>
    </location>
    <ligand>
        <name>ATP</name>
        <dbReference type="ChEBI" id="CHEBI:30616"/>
    </ligand>
</feature>
<feature type="binding site" evidence="1">
    <location>
        <begin position="116"/>
        <end position="120"/>
    </location>
    <ligand>
        <name>ATP</name>
        <dbReference type="ChEBI" id="CHEBI:30616"/>
    </ligand>
</feature>
<feature type="binding site" evidence="1">
    <location>
        <position position="505"/>
    </location>
    <ligand>
        <name>ATP</name>
        <dbReference type="ChEBI" id="CHEBI:30616"/>
    </ligand>
</feature>
<organism>
    <name type="scientific">Mycolicibacterium vanbaalenii (strain DSM 7251 / JCM 13017 / BCRC 16820 / KCTC 9966 / NRRL B-24157 / PYR-1)</name>
    <name type="common">Mycobacterium vanbaalenii</name>
    <dbReference type="NCBI Taxonomy" id="350058"/>
    <lineage>
        <taxon>Bacteria</taxon>
        <taxon>Bacillati</taxon>
        <taxon>Actinomycetota</taxon>
        <taxon>Actinomycetes</taxon>
        <taxon>Mycobacteriales</taxon>
        <taxon>Mycobacteriaceae</taxon>
        <taxon>Mycolicibacterium</taxon>
    </lineage>
</organism>
<name>SECA3_MYCVP</name>
<protein>
    <recommendedName>
        <fullName evidence="1">Protein translocase subunit SecA 3</fullName>
        <ecNumber evidence="1">7.4.2.8</ecNumber>
    </recommendedName>
</protein>
<gene>
    <name evidence="1" type="primary">secA3</name>
    <name type="ordered locus">Mvan_3162</name>
</gene>
<comment type="function">
    <text evidence="1">Part of the Sec protein translocase complex. Interacts with the SecYEG preprotein conducting channel. Has a central role in coupling the hydrolysis of ATP to the transfer of proteins into and across the cell membrane, serving as an ATP-driven molecular motor driving the stepwise translocation of polypeptide chains across the membrane.</text>
</comment>
<comment type="catalytic activity">
    <reaction evidence="1">
        <text>ATP + H2O + cellular proteinSide 1 = ADP + phosphate + cellular proteinSide 2.</text>
        <dbReference type="EC" id="7.4.2.8"/>
    </reaction>
</comment>
<comment type="subunit">
    <text evidence="1">Monomer and homodimer. Part of the essential Sec protein translocation apparatus which comprises SecA, SecYEG and auxiliary proteins SecDF. Other proteins may also be involved.</text>
</comment>
<comment type="subcellular location">
    <subcellularLocation>
        <location evidence="1">Cell membrane</location>
        <topology evidence="1">Peripheral membrane protein</topology>
        <orientation evidence="1">Cytoplasmic side</orientation>
    </subcellularLocation>
    <subcellularLocation>
        <location evidence="1">Cytoplasm</location>
    </subcellularLocation>
    <text evidence="1">Distribution is 50-50.</text>
</comment>
<comment type="similarity">
    <text evidence="1">Belongs to the SecA family.</text>
</comment>
<comment type="sequence caution" evidence="2">
    <conflict type="erroneous initiation">
        <sequence resource="EMBL-CDS" id="ABM13964"/>
    </conflict>
    <text>Truncated N-terminus.</text>
</comment>
<sequence>MARTSSKTDSPKTGRLSGRFWKLLGASTDKDQARSMAQVHKAAEFDAKAADLDDEQLRKAARLLELDDLADSTDVPQFLAIAREAAKRTTGLTPFDVQLQGALRMLAGDVVEMATGEGKTLSGAIAAAGYALAGRNVHVITINDYLARRDAEWMGPLIEAMGLTIGWITADSTAAERRAAYRCDITYASVNEIGFDVLRDQLVTDVDDLVSPNPDVALIDEADSVLVDEALVPLVLAGTSHRETPRLELIRLVGELDENTDFATDNDSRNVHLTEAGARKIEAALGGIDLYSEEHVATTLTEVNVALHAHVLLQRDVHYIVRDDAVHLINSSRGRIATLQRWPDGLQAAVEAKEGIETTETGEVLDTITVQALINRYPRVCGMTGTALAAGEQLRQFYKLGVSPIPPNKPNIRQDETDRVYVTIAAKNDAVIEHIAEVHETGQPVLVGTRDVAESEEIHRRLVKAGVPAVVLNAKNDAEEAAVIAEAGKLGAVTVSTQMAGRGTDIRLGGSDEEDHDRVAELGGLHVIGTGRHHTERLDNQLRGRAGRQGDPGSSVFFSSWEDDLVMSHLEDNKLPLECDETGRVISPKAATLLEHAQRVAEGRLLDVHANTWRYNQLIAQQRAILVERRNTLLRTTTARDEIAELVPERYEEVKARLTAKDSETGEAKLETICRLIMLYHLDRAWADHLAFLADIRESIHLRALGRQNPLDEFHRMAVDAFASLAADAIEAAQQTFETAPSIEDEPGVDLSKLARPTSTWTYMVHDNPLADDTLSALSLPGVFR</sequence>
<accession>A1T9W4</accession>
<evidence type="ECO:0000255" key="1">
    <source>
        <dbReference type="HAMAP-Rule" id="MF_01382"/>
    </source>
</evidence>
<evidence type="ECO:0000305" key="2"/>
<reference key="1">
    <citation type="submission" date="2006-12" db="EMBL/GenBank/DDBJ databases">
        <title>Complete sequence of Mycobacterium vanbaalenii PYR-1.</title>
        <authorList>
            <consortium name="US DOE Joint Genome Institute"/>
            <person name="Copeland A."/>
            <person name="Lucas S."/>
            <person name="Lapidus A."/>
            <person name="Barry K."/>
            <person name="Detter J.C."/>
            <person name="Glavina del Rio T."/>
            <person name="Hammon N."/>
            <person name="Israni S."/>
            <person name="Dalin E."/>
            <person name="Tice H."/>
            <person name="Pitluck S."/>
            <person name="Singan V."/>
            <person name="Schmutz J."/>
            <person name="Larimer F."/>
            <person name="Land M."/>
            <person name="Hauser L."/>
            <person name="Kyrpides N."/>
            <person name="Anderson I.J."/>
            <person name="Miller C."/>
            <person name="Richardson P."/>
        </authorList>
    </citation>
    <scope>NUCLEOTIDE SEQUENCE [LARGE SCALE GENOMIC DNA]</scope>
    <source>
        <strain>DSM 7251 / JCM 13017 / BCRC 16820 / KCTC 9966 / NRRL B-24157 / PYR-1</strain>
    </source>
</reference>
<keyword id="KW-0067">ATP-binding</keyword>
<keyword id="KW-1003">Cell membrane</keyword>
<keyword id="KW-0963">Cytoplasm</keyword>
<keyword id="KW-0472">Membrane</keyword>
<keyword id="KW-0547">Nucleotide-binding</keyword>
<keyword id="KW-0653">Protein transport</keyword>
<keyword id="KW-1278">Translocase</keyword>
<keyword id="KW-0811">Translocation</keyword>
<keyword id="KW-0813">Transport</keyword>